<proteinExistence type="evidence at protein level"/>
<organism>
    <name type="scientific">Mus musculus</name>
    <name type="common">Mouse</name>
    <dbReference type="NCBI Taxonomy" id="10090"/>
    <lineage>
        <taxon>Eukaryota</taxon>
        <taxon>Metazoa</taxon>
        <taxon>Chordata</taxon>
        <taxon>Craniata</taxon>
        <taxon>Vertebrata</taxon>
        <taxon>Euteleostomi</taxon>
        <taxon>Mammalia</taxon>
        <taxon>Eutheria</taxon>
        <taxon>Euarchontoglires</taxon>
        <taxon>Glires</taxon>
        <taxon>Rodentia</taxon>
        <taxon>Myomorpha</taxon>
        <taxon>Muroidea</taxon>
        <taxon>Muridae</taxon>
        <taxon>Murinae</taxon>
        <taxon>Mus</taxon>
        <taxon>Mus</taxon>
    </lineage>
</organism>
<sequence length="165" mass="18347">MRSAARVSRSNSHPRTRHPTRENEGTTWGSQPSRTERDGDRKCPPSILRPRRQECGCHGGEPQKTSRHVRFREPLEVAVHYIARKDTTAAIKVPSRPASHGGSPLQPASCSGSLFLWLTLCALLGVVLVLYCGQAKRVTAALEDLLAQLLALILRLWRVVLACWH</sequence>
<gene>
    <name type="primary">Nrac</name>
</gene>
<protein>
    <recommendedName>
        <fullName>Nutritionally-regulated adipose and cardiac-enriched protein</fullName>
    </recommendedName>
</protein>
<reference key="1">
    <citation type="journal article" date="2005" name="Science">
        <title>The transcriptional landscape of the mammalian genome.</title>
        <authorList>
            <person name="Carninci P."/>
            <person name="Kasukawa T."/>
            <person name="Katayama S."/>
            <person name="Gough J."/>
            <person name="Frith M.C."/>
            <person name="Maeda N."/>
            <person name="Oyama R."/>
            <person name="Ravasi T."/>
            <person name="Lenhard B."/>
            <person name="Wells C."/>
            <person name="Kodzius R."/>
            <person name="Shimokawa K."/>
            <person name="Bajic V.B."/>
            <person name="Brenner S.E."/>
            <person name="Batalov S."/>
            <person name="Forrest A.R."/>
            <person name="Zavolan M."/>
            <person name="Davis M.J."/>
            <person name="Wilming L.G."/>
            <person name="Aidinis V."/>
            <person name="Allen J.E."/>
            <person name="Ambesi-Impiombato A."/>
            <person name="Apweiler R."/>
            <person name="Aturaliya R.N."/>
            <person name="Bailey T.L."/>
            <person name="Bansal M."/>
            <person name="Baxter L."/>
            <person name="Beisel K.W."/>
            <person name="Bersano T."/>
            <person name="Bono H."/>
            <person name="Chalk A.M."/>
            <person name="Chiu K.P."/>
            <person name="Choudhary V."/>
            <person name="Christoffels A."/>
            <person name="Clutterbuck D.R."/>
            <person name="Crowe M.L."/>
            <person name="Dalla E."/>
            <person name="Dalrymple B.P."/>
            <person name="de Bono B."/>
            <person name="Della Gatta G."/>
            <person name="di Bernardo D."/>
            <person name="Down T."/>
            <person name="Engstrom P."/>
            <person name="Fagiolini M."/>
            <person name="Faulkner G."/>
            <person name="Fletcher C.F."/>
            <person name="Fukushima T."/>
            <person name="Furuno M."/>
            <person name="Futaki S."/>
            <person name="Gariboldi M."/>
            <person name="Georgii-Hemming P."/>
            <person name="Gingeras T.R."/>
            <person name="Gojobori T."/>
            <person name="Green R.E."/>
            <person name="Gustincich S."/>
            <person name="Harbers M."/>
            <person name="Hayashi Y."/>
            <person name="Hensch T.K."/>
            <person name="Hirokawa N."/>
            <person name="Hill D."/>
            <person name="Huminiecki L."/>
            <person name="Iacono M."/>
            <person name="Ikeo K."/>
            <person name="Iwama A."/>
            <person name="Ishikawa T."/>
            <person name="Jakt M."/>
            <person name="Kanapin A."/>
            <person name="Katoh M."/>
            <person name="Kawasawa Y."/>
            <person name="Kelso J."/>
            <person name="Kitamura H."/>
            <person name="Kitano H."/>
            <person name="Kollias G."/>
            <person name="Krishnan S.P."/>
            <person name="Kruger A."/>
            <person name="Kummerfeld S.K."/>
            <person name="Kurochkin I.V."/>
            <person name="Lareau L.F."/>
            <person name="Lazarevic D."/>
            <person name="Lipovich L."/>
            <person name="Liu J."/>
            <person name="Liuni S."/>
            <person name="McWilliam S."/>
            <person name="Madan Babu M."/>
            <person name="Madera M."/>
            <person name="Marchionni L."/>
            <person name="Matsuda H."/>
            <person name="Matsuzawa S."/>
            <person name="Miki H."/>
            <person name="Mignone F."/>
            <person name="Miyake S."/>
            <person name="Morris K."/>
            <person name="Mottagui-Tabar S."/>
            <person name="Mulder N."/>
            <person name="Nakano N."/>
            <person name="Nakauchi H."/>
            <person name="Ng P."/>
            <person name="Nilsson R."/>
            <person name="Nishiguchi S."/>
            <person name="Nishikawa S."/>
            <person name="Nori F."/>
            <person name="Ohara O."/>
            <person name="Okazaki Y."/>
            <person name="Orlando V."/>
            <person name="Pang K.C."/>
            <person name="Pavan W.J."/>
            <person name="Pavesi G."/>
            <person name="Pesole G."/>
            <person name="Petrovsky N."/>
            <person name="Piazza S."/>
            <person name="Reed J."/>
            <person name="Reid J.F."/>
            <person name="Ring B.Z."/>
            <person name="Ringwald M."/>
            <person name="Rost B."/>
            <person name="Ruan Y."/>
            <person name="Salzberg S.L."/>
            <person name="Sandelin A."/>
            <person name="Schneider C."/>
            <person name="Schoenbach C."/>
            <person name="Sekiguchi K."/>
            <person name="Semple C.A."/>
            <person name="Seno S."/>
            <person name="Sessa L."/>
            <person name="Sheng Y."/>
            <person name="Shibata Y."/>
            <person name="Shimada H."/>
            <person name="Shimada K."/>
            <person name="Silva D."/>
            <person name="Sinclair B."/>
            <person name="Sperling S."/>
            <person name="Stupka E."/>
            <person name="Sugiura K."/>
            <person name="Sultana R."/>
            <person name="Takenaka Y."/>
            <person name="Taki K."/>
            <person name="Tammoja K."/>
            <person name="Tan S.L."/>
            <person name="Tang S."/>
            <person name="Taylor M.S."/>
            <person name="Tegner J."/>
            <person name="Teichmann S.A."/>
            <person name="Ueda H.R."/>
            <person name="van Nimwegen E."/>
            <person name="Verardo R."/>
            <person name="Wei C.L."/>
            <person name="Yagi K."/>
            <person name="Yamanishi H."/>
            <person name="Zabarovsky E."/>
            <person name="Zhu S."/>
            <person name="Zimmer A."/>
            <person name="Hide W."/>
            <person name="Bult C."/>
            <person name="Grimmond S.M."/>
            <person name="Teasdale R.D."/>
            <person name="Liu E.T."/>
            <person name="Brusic V."/>
            <person name="Quackenbush J."/>
            <person name="Wahlestedt C."/>
            <person name="Mattick J.S."/>
            <person name="Hume D.A."/>
            <person name="Kai C."/>
            <person name="Sasaki D."/>
            <person name="Tomaru Y."/>
            <person name="Fukuda S."/>
            <person name="Kanamori-Katayama M."/>
            <person name="Suzuki M."/>
            <person name="Aoki J."/>
            <person name="Arakawa T."/>
            <person name="Iida J."/>
            <person name="Imamura K."/>
            <person name="Itoh M."/>
            <person name="Kato T."/>
            <person name="Kawaji H."/>
            <person name="Kawagashira N."/>
            <person name="Kawashima T."/>
            <person name="Kojima M."/>
            <person name="Kondo S."/>
            <person name="Konno H."/>
            <person name="Nakano K."/>
            <person name="Ninomiya N."/>
            <person name="Nishio T."/>
            <person name="Okada M."/>
            <person name="Plessy C."/>
            <person name="Shibata K."/>
            <person name="Shiraki T."/>
            <person name="Suzuki S."/>
            <person name="Tagami M."/>
            <person name="Waki K."/>
            <person name="Watahiki A."/>
            <person name="Okamura-Oho Y."/>
            <person name="Suzuki H."/>
            <person name="Kawai J."/>
            <person name="Hayashizaki Y."/>
        </authorList>
    </citation>
    <scope>NUCLEOTIDE SEQUENCE [LARGE SCALE MRNA]</scope>
    <source>
        <strain>C57BL/6J</strain>
        <tissue>Aorta</tissue>
        <tissue>Vein</tissue>
    </source>
</reference>
<reference key="2">
    <citation type="journal article" date="2004" name="Genome Res.">
        <title>The status, quality, and expansion of the NIH full-length cDNA project: the Mammalian Gene Collection (MGC).</title>
        <authorList>
            <consortium name="The MGC Project Team"/>
        </authorList>
    </citation>
    <scope>NUCLEOTIDE SEQUENCE [LARGE SCALE MRNA]</scope>
    <source>
        <strain>C57BL/6J</strain>
        <strain>FVB/N</strain>
        <tissue>Mammary gland</tissue>
        <tissue>Salivary gland</tissue>
    </source>
</reference>
<reference key="3">
    <citation type="journal article" date="2012" name="PLoS ONE">
        <title>Nrac, a novel nutritionally-regulated adipose and cardiac-enriched gene.</title>
        <authorList>
            <person name="Zhang R."/>
            <person name="Yao F."/>
            <person name="Gao F."/>
            <person name="Abou-Samra A.B."/>
        </authorList>
    </citation>
    <scope>TISSUE SPECIFICITY</scope>
    <scope>SUBCELLULAR LOCATION</scope>
    <scope>INDUCTION</scope>
</reference>
<name>NRAC_MOUSE</name>
<feature type="chain" id="PRO_0000326053" description="Nutritionally-regulated adipose and cardiac-enriched protein">
    <location>
        <begin position="1"/>
        <end position="165"/>
    </location>
</feature>
<feature type="transmembrane region" description="Helical" evidence="1">
    <location>
        <begin position="112"/>
        <end position="132"/>
    </location>
</feature>
<feature type="region of interest" description="Disordered" evidence="2">
    <location>
        <begin position="1"/>
        <end position="47"/>
    </location>
</feature>
<feature type="compositionally biased region" description="Basic and acidic residues" evidence="2">
    <location>
        <begin position="34"/>
        <end position="43"/>
    </location>
</feature>
<feature type="sequence conflict" description="In Ref. 1; BAC37789/BAE37179." evidence="4" ref="1">
    <original>R</original>
    <variation>C</variation>
    <location>
        <position position="17"/>
    </location>
</feature>
<feature type="sequence conflict" description="In Ref. 1; BAC37789/BAE37179." evidence="4" ref="1">
    <original>W</original>
    <variation>R</variation>
    <location>
        <position position="28"/>
    </location>
</feature>
<feature type="sequence conflict" description="In Ref. 1; BAC37789/BAE37179." evidence="4" ref="1">
    <original>D</original>
    <variation>N</variation>
    <location>
        <position position="40"/>
    </location>
</feature>
<feature type="sequence conflict" description="In Ref. 1; BAC37789/BAE37179." evidence="4" ref="1">
    <original>C</original>
    <variation>R</variation>
    <location>
        <position position="110"/>
    </location>
</feature>
<feature type="sequence conflict" description="In Ref. 1; BAC37789/BAE37179." evidence="4" ref="1">
    <original>R</original>
    <variation>C</variation>
    <location>
        <position position="158"/>
    </location>
</feature>
<comment type="subcellular location">
    <subcellularLocation>
        <location evidence="3">Cell membrane</location>
        <topology evidence="3">Single-pass membrane protein</topology>
    </subcellularLocation>
</comment>
<comment type="tissue specificity">
    <text evidence="3">Predominantly expressed in white adipose tissue (at protein level) and brown adipose tissue. Also detected in heart.</text>
</comment>
<comment type="induction">
    <text evidence="3">Highly up-regulated during 3T3-L1 cell differentiation into adipocytes. In vivo, down-regulated by fasting in both white and brown adipose tissues. Reduced in white adipose tissue in obese animals.</text>
</comment>
<keyword id="KW-1003">Cell membrane</keyword>
<keyword id="KW-0472">Membrane</keyword>
<keyword id="KW-1185">Reference proteome</keyword>
<keyword id="KW-0812">Transmembrane</keyword>
<keyword id="KW-1133">Transmembrane helix</keyword>
<evidence type="ECO:0000255" key="1"/>
<evidence type="ECO:0000256" key="2">
    <source>
        <dbReference type="SAM" id="MobiDB-lite"/>
    </source>
</evidence>
<evidence type="ECO:0000269" key="3">
    <source>
    </source>
</evidence>
<evidence type="ECO:0000305" key="4"/>
<accession>Q8BNX7</accession>
<accession>Q8R0Q1</accession>
<dbReference type="EMBL" id="AK079947">
    <property type="protein sequence ID" value="BAC37789.1"/>
    <property type="molecule type" value="mRNA"/>
</dbReference>
<dbReference type="EMBL" id="AK163065">
    <property type="protein sequence ID" value="BAE37179.1"/>
    <property type="molecule type" value="mRNA"/>
</dbReference>
<dbReference type="EMBL" id="BC026527">
    <property type="protein sequence ID" value="AAH26527.1"/>
    <property type="molecule type" value="mRNA"/>
</dbReference>
<dbReference type="EMBL" id="BC096642">
    <property type="protein sequence ID" value="AAH96642.1"/>
    <property type="molecule type" value="mRNA"/>
</dbReference>
<dbReference type="CCDS" id="CCDS49188.1"/>
<dbReference type="RefSeq" id="NP_796013.1">
    <property type="nucleotide sequence ID" value="NM_177039.4"/>
</dbReference>
<dbReference type="RefSeq" id="XP_006516043.1">
    <property type="nucleotide sequence ID" value="XM_006515980.3"/>
</dbReference>
<dbReference type="RefSeq" id="XP_006516044.1">
    <property type="nucleotide sequence ID" value="XM_006515981.3"/>
</dbReference>
<dbReference type="SMR" id="Q8BNX7"/>
<dbReference type="FunCoup" id="Q8BNX7">
    <property type="interactions" value="377"/>
</dbReference>
<dbReference type="STRING" id="10090.ENSMUSP00000056220"/>
<dbReference type="PaxDb" id="10090-ENSMUSP00000056220"/>
<dbReference type="GeneID" id="319942"/>
<dbReference type="KEGG" id="mmu:319942"/>
<dbReference type="UCSC" id="uc007peq.2">
    <property type="organism name" value="mouse"/>
</dbReference>
<dbReference type="AGR" id="MGI:2443020"/>
<dbReference type="MGI" id="MGI:2443020">
    <property type="gene designation" value="A530016L24Rik"/>
</dbReference>
<dbReference type="eggNOG" id="ENOG502S3R9">
    <property type="taxonomic scope" value="Eukaryota"/>
</dbReference>
<dbReference type="InParanoid" id="Q8BNX7"/>
<dbReference type="OrthoDB" id="9535799at2759"/>
<dbReference type="PhylomeDB" id="Q8BNX7"/>
<dbReference type="TreeFam" id="TF336371"/>
<dbReference type="BioGRID-ORCS" id="319942">
    <property type="hits" value="1 hit in 77 CRISPR screens"/>
</dbReference>
<dbReference type="ChiTaRS" id="A530016L24Rik">
    <property type="organism name" value="mouse"/>
</dbReference>
<dbReference type="PRO" id="PR:Q8BNX7"/>
<dbReference type="Proteomes" id="UP000000589">
    <property type="component" value="Unplaced"/>
</dbReference>
<dbReference type="RNAct" id="Q8BNX7">
    <property type="molecule type" value="protein"/>
</dbReference>
<dbReference type="GO" id="GO:0005886">
    <property type="term" value="C:plasma membrane"/>
    <property type="evidence" value="ECO:0000314"/>
    <property type="project" value="MGI"/>
</dbReference>
<dbReference type="InterPro" id="IPR028114">
    <property type="entry name" value="DUF4658"/>
</dbReference>
<dbReference type="PANTHER" id="PTHR36868">
    <property type="entry name" value="NUTRITIONALLY-REGULATED ADIPOSE AND CARDIAC ENRICHED PROTEIN HOMOLOG"/>
    <property type="match status" value="1"/>
</dbReference>
<dbReference type="PANTHER" id="PTHR36868:SF1">
    <property type="entry name" value="NUTRITIONALLY-REGULATED ADIPOSE AND CARDIAC ENRICHED PROTEIN HOMOLOG"/>
    <property type="match status" value="1"/>
</dbReference>
<dbReference type="Pfam" id="PF15555">
    <property type="entry name" value="DUF4658"/>
    <property type="match status" value="1"/>
</dbReference>